<dbReference type="EMBL" id="CP000936">
    <property type="protein sequence ID" value="ACA36273.1"/>
    <property type="molecule type" value="Genomic_DNA"/>
</dbReference>
<dbReference type="RefSeq" id="WP_001196960.1">
    <property type="nucleotide sequence ID" value="NC_010380.1"/>
</dbReference>
<dbReference type="SMR" id="B1ICF4"/>
<dbReference type="GeneID" id="45653386"/>
<dbReference type="KEGG" id="spv:SPH_1485"/>
<dbReference type="HOGENOM" id="CLU_086499_3_2_9"/>
<dbReference type="Proteomes" id="UP000002163">
    <property type="component" value="Chromosome"/>
</dbReference>
<dbReference type="GO" id="GO:0022625">
    <property type="term" value="C:cytosolic large ribosomal subunit"/>
    <property type="evidence" value="ECO:0007669"/>
    <property type="project" value="TreeGrafter"/>
</dbReference>
<dbReference type="GO" id="GO:0003729">
    <property type="term" value="F:mRNA binding"/>
    <property type="evidence" value="ECO:0007669"/>
    <property type="project" value="TreeGrafter"/>
</dbReference>
<dbReference type="GO" id="GO:0003735">
    <property type="term" value="F:structural constituent of ribosome"/>
    <property type="evidence" value="ECO:0007669"/>
    <property type="project" value="InterPro"/>
</dbReference>
<dbReference type="GO" id="GO:0006412">
    <property type="term" value="P:translation"/>
    <property type="evidence" value="ECO:0007669"/>
    <property type="project" value="UniProtKB-UniRule"/>
</dbReference>
<dbReference type="CDD" id="cd00387">
    <property type="entry name" value="Ribosomal_L7_L12"/>
    <property type="match status" value="1"/>
</dbReference>
<dbReference type="FunFam" id="1.20.5.710:FF:000002">
    <property type="entry name" value="50S ribosomal protein L7/L12"/>
    <property type="match status" value="1"/>
</dbReference>
<dbReference type="FunFam" id="3.30.1390.10:FF:000001">
    <property type="entry name" value="50S ribosomal protein L7/L12"/>
    <property type="match status" value="1"/>
</dbReference>
<dbReference type="Gene3D" id="3.30.1390.10">
    <property type="match status" value="1"/>
</dbReference>
<dbReference type="Gene3D" id="1.20.5.710">
    <property type="entry name" value="Single helix bin"/>
    <property type="match status" value="1"/>
</dbReference>
<dbReference type="HAMAP" id="MF_00368">
    <property type="entry name" value="Ribosomal_bL12"/>
    <property type="match status" value="1"/>
</dbReference>
<dbReference type="InterPro" id="IPR000206">
    <property type="entry name" value="Ribosomal_bL12"/>
</dbReference>
<dbReference type="InterPro" id="IPR013823">
    <property type="entry name" value="Ribosomal_bL12_C"/>
</dbReference>
<dbReference type="InterPro" id="IPR014719">
    <property type="entry name" value="Ribosomal_bL12_C/ClpS-like"/>
</dbReference>
<dbReference type="InterPro" id="IPR008932">
    <property type="entry name" value="Ribosomal_bL12_oligo"/>
</dbReference>
<dbReference type="InterPro" id="IPR036235">
    <property type="entry name" value="Ribosomal_bL12_oligo_N_sf"/>
</dbReference>
<dbReference type="NCBIfam" id="TIGR00855">
    <property type="entry name" value="L12"/>
    <property type="match status" value="1"/>
</dbReference>
<dbReference type="PANTHER" id="PTHR45987">
    <property type="entry name" value="39S RIBOSOMAL PROTEIN L12"/>
    <property type="match status" value="1"/>
</dbReference>
<dbReference type="PANTHER" id="PTHR45987:SF4">
    <property type="entry name" value="LARGE RIBOSOMAL SUBUNIT PROTEIN BL12M"/>
    <property type="match status" value="1"/>
</dbReference>
<dbReference type="Pfam" id="PF00542">
    <property type="entry name" value="Ribosomal_L12"/>
    <property type="match status" value="1"/>
</dbReference>
<dbReference type="Pfam" id="PF16320">
    <property type="entry name" value="Ribosomal_L12_N"/>
    <property type="match status" value="1"/>
</dbReference>
<dbReference type="SUPFAM" id="SSF54736">
    <property type="entry name" value="ClpS-like"/>
    <property type="match status" value="1"/>
</dbReference>
<dbReference type="SUPFAM" id="SSF48300">
    <property type="entry name" value="Ribosomal protein L7/12, oligomerisation (N-terminal) domain"/>
    <property type="match status" value="1"/>
</dbReference>
<accession>B1ICF4</accession>
<organism>
    <name type="scientific">Streptococcus pneumoniae (strain Hungary19A-6)</name>
    <dbReference type="NCBI Taxonomy" id="487214"/>
    <lineage>
        <taxon>Bacteria</taxon>
        <taxon>Bacillati</taxon>
        <taxon>Bacillota</taxon>
        <taxon>Bacilli</taxon>
        <taxon>Lactobacillales</taxon>
        <taxon>Streptococcaceae</taxon>
        <taxon>Streptococcus</taxon>
    </lineage>
</organism>
<protein>
    <recommendedName>
        <fullName evidence="1">Large ribosomal subunit protein bL12</fullName>
    </recommendedName>
    <alternativeName>
        <fullName evidence="2">50S ribosomal protein L7/L12</fullName>
    </alternativeName>
</protein>
<keyword id="KW-0687">Ribonucleoprotein</keyword>
<keyword id="KW-0689">Ribosomal protein</keyword>
<feature type="chain" id="PRO_1000121495" description="Large ribosomal subunit protein bL12">
    <location>
        <begin position="1"/>
        <end position="122"/>
    </location>
</feature>
<evidence type="ECO:0000255" key="1">
    <source>
        <dbReference type="HAMAP-Rule" id="MF_00368"/>
    </source>
</evidence>
<evidence type="ECO:0000305" key="2"/>
<reference key="1">
    <citation type="journal article" date="2010" name="Genome Biol.">
        <title>Structure and dynamics of the pan-genome of Streptococcus pneumoniae and closely related species.</title>
        <authorList>
            <person name="Donati C."/>
            <person name="Hiller N.L."/>
            <person name="Tettelin H."/>
            <person name="Muzzi A."/>
            <person name="Croucher N.J."/>
            <person name="Angiuoli S.V."/>
            <person name="Oggioni M."/>
            <person name="Dunning Hotopp J.C."/>
            <person name="Hu F.Z."/>
            <person name="Riley D.R."/>
            <person name="Covacci A."/>
            <person name="Mitchell T.J."/>
            <person name="Bentley S.D."/>
            <person name="Kilian M."/>
            <person name="Ehrlich G.D."/>
            <person name="Rappuoli R."/>
            <person name="Moxon E.R."/>
            <person name="Masignani V."/>
        </authorList>
    </citation>
    <scope>NUCLEOTIDE SEQUENCE [LARGE SCALE GENOMIC DNA]</scope>
    <source>
        <strain>Hungary19A-6</strain>
    </source>
</reference>
<comment type="function">
    <text evidence="1">Forms part of the ribosomal stalk which helps the ribosome interact with GTP-bound translation factors. Is thus essential for accurate translation.</text>
</comment>
<comment type="subunit">
    <text evidence="1">Homodimer. Part of the ribosomal stalk of the 50S ribosomal subunit. Forms a multimeric L10(L12)X complex, where L10 forms an elongated spine to which 2 to 4 L12 dimers bind in a sequential fashion. Binds GTP-bound translation factors.</text>
</comment>
<comment type="similarity">
    <text evidence="1">Belongs to the bacterial ribosomal protein bL12 family.</text>
</comment>
<gene>
    <name evidence="1" type="primary">rplL</name>
    <name type="ordered locus">SPH_1485</name>
</gene>
<sequence length="122" mass="12442">MALNIENIIAEIKEASILELNDLVKAIEEEFGVTAAAPVAVAAADAADAGAAKDSFDVELTSAGDKKVGVIKVVREITGLGLKEAKELVDGAPALVKEGVATAEAEEIKAKLEEAGASVTLK</sequence>
<name>RL7_STRPI</name>
<proteinExistence type="inferred from homology"/>